<dbReference type="EC" id="2.7.1.23" evidence="1"/>
<dbReference type="EMBL" id="CP000075">
    <property type="protein sequence ID" value="AAY36733.1"/>
    <property type="molecule type" value="Genomic_DNA"/>
</dbReference>
<dbReference type="RefSeq" id="WP_003409651.1">
    <property type="nucleotide sequence ID" value="NC_007005.1"/>
</dbReference>
<dbReference type="RefSeq" id="YP_234771.1">
    <property type="nucleotide sequence ID" value="NC_007005.1"/>
</dbReference>
<dbReference type="SMR" id="Q4ZVT9"/>
<dbReference type="STRING" id="205918.Psyr_1685"/>
<dbReference type="KEGG" id="psb:Psyr_1685"/>
<dbReference type="PATRIC" id="fig|205918.7.peg.1724"/>
<dbReference type="eggNOG" id="COG0061">
    <property type="taxonomic scope" value="Bacteria"/>
</dbReference>
<dbReference type="HOGENOM" id="CLU_008831_0_1_6"/>
<dbReference type="OrthoDB" id="9774737at2"/>
<dbReference type="Proteomes" id="UP000000426">
    <property type="component" value="Chromosome"/>
</dbReference>
<dbReference type="GO" id="GO:0005737">
    <property type="term" value="C:cytoplasm"/>
    <property type="evidence" value="ECO:0007669"/>
    <property type="project" value="UniProtKB-SubCell"/>
</dbReference>
<dbReference type="GO" id="GO:0005524">
    <property type="term" value="F:ATP binding"/>
    <property type="evidence" value="ECO:0007669"/>
    <property type="project" value="UniProtKB-KW"/>
</dbReference>
<dbReference type="GO" id="GO:0046872">
    <property type="term" value="F:metal ion binding"/>
    <property type="evidence" value="ECO:0007669"/>
    <property type="project" value="UniProtKB-UniRule"/>
</dbReference>
<dbReference type="GO" id="GO:0051287">
    <property type="term" value="F:NAD binding"/>
    <property type="evidence" value="ECO:0007669"/>
    <property type="project" value="UniProtKB-ARBA"/>
</dbReference>
<dbReference type="GO" id="GO:0003951">
    <property type="term" value="F:NAD+ kinase activity"/>
    <property type="evidence" value="ECO:0007669"/>
    <property type="project" value="UniProtKB-UniRule"/>
</dbReference>
<dbReference type="GO" id="GO:0019674">
    <property type="term" value="P:NAD metabolic process"/>
    <property type="evidence" value="ECO:0007669"/>
    <property type="project" value="InterPro"/>
</dbReference>
<dbReference type="GO" id="GO:0006741">
    <property type="term" value="P:NADP biosynthetic process"/>
    <property type="evidence" value="ECO:0007669"/>
    <property type="project" value="UniProtKB-UniRule"/>
</dbReference>
<dbReference type="FunFam" id="2.60.200.30:FF:000001">
    <property type="entry name" value="NAD kinase"/>
    <property type="match status" value="1"/>
</dbReference>
<dbReference type="Gene3D" id="3.40.50.10330">
    <property type="entry name" value="Probable inorganic polyphosphate/atp-NAD kinase, domain 1"/>
    <property type="match status" value="1"/>
</dbReference>
<dbReference type="Gene3D" id="2.60.200.30">
    <property type="entry name" value="Probable inorganic polyphosphate/atp-NAD kinase, domain 2"/>
    <property type="match status" value="1"/>
</dbReference>
<dbReference type="HAMAP" id="MF_00361">
    <property type="entry name" value="NAD_kinase"/>
    <property type="match status" value="1"/>
</dbReference>
<dbReference type="InterPro" id="IPR017438">
    <property type="entry name" value="ATP-NAD_kinase_N"/>
</dbReference>
<dbReference type="InterPro" id="IPR017437">
    <property type="entry name" value="ATP-NAD_kinase_PpnK-typ_C"/>
</dbReference>
<dbReference type="InterPro" id="IPR016064">
    <property type="entry name" value="NAD/diacylglycerol_kinase_sf"/>
</dbReference>
<dbReference type="InterPro" id="IPR002504">
    <property type="entry name" value="NADK"/>
</dbReference>
<dbReference type="NCBIfam" id="NF002306">
    <property type="entry name" value="PRK01231.1"/>
    <property type="match status" value="1"/>
</dbReference>
<dbReference type="PANTHER" id="PTHR20275">
    <property type="entry name" value="NAD KINASE"/>
    <property type="match status" value="1"/>
</dbReference>
<dbReference type="PANTHER" id="PTHR20275:SF0">
    <property type="entry name" value="NAD KINASE"/>
    <property type="match status" value="1"/>
</dbReference>
<dbReference type="Pfam" id="PF01513">
    <property type="entry name" value="NAD_kinase"/>
    <property type="match status" value="1"/>
</dbReference>
<dbReference type="Pfam" id="PF20143">
    <property type="entry name" value="NAD_kinase_C"/>
    <property type="match status" value="1"/>
</dbReference>
<dbReference type="SUPFAM" id="SSF111331">
    <property type="entry name" value="NAD kinase/diacylglycerol kinase-like"/>
    <property type="match status" value="1"/>
</dbReference>
<sequence length="296" mass="32241">MEQFRNIGIIGRLGSVQVLETVRRLKRFLLDRHLHVILEETIAEVLPGHGLQTSSRKMLGEVCDMVIVVGGDGSLLGAARALARHNVPVLGINRGSLGFLTDIRPDELEVKCAEVLDGHYLVENRFLLQAEVRRHGEAIGQGDALNDVVLHPGKSTRMIEFEIYIDGQFVCSQKADGLIVATPTGSTAYALSAGGPIMHPKLDAIVIVPMYPHTLSGRPIVVDGNSELKIVVSKDMTIYPQVSCDGQNHFTCAPGDTITVSKKPQKLRLIHPLDHNYYEVCRTKLGWGSKLGGGGD</sequence>
<accession>Q4ZVT9</accession>
<keyword id="KW-0067">ATP-binding</keyword>
<keyword id="KW-0963">Cytoplasm</keyword>
<keyword id="KW-0418">Kinase</keyword>
<keyword id="KW-0520">NAD</keyword>
<keyword id="KW-0521">NADP</keyword>
<keyword id="KW-0547">Nucleotide-binding</keyword>
<keyword id="KW-0808">Transferase</keyword>
<protein>
    <recommendedName>
        <fullName evidence="1">NAD kinase</fullName>
        <ecNumber evidence="1">2.7.1.23</ecNumber>
    </recommendedName>
    <alternativeName>
        <fullName evidence="1">ATP-dependent NAD kinase</fullName>
    </alternativeName>
</protein>
<reference key="1">
    <citation type="journal article" date="2005" name="Proc. Natl. Acad. Sci. U.S.A.">
        <title>Comparison of the complete genome sequences of Pseudomonas syringae pv. syringae B728a and pv. tomato DC3000.</title>
        <authorList>
            <person name="Feil H."/>
            <person name="Feil W.S."/>
            <person name="Chain P."/>
            <person name="Larimer F."/>
            <person name="Dibartolo G."/>
            <person name="Copeland A."/>
            <person name="Lykidis A."/>
            <person name="Trong S."/>
            <person name="Nolan M."/>
            <person name="Goltsman E."/>
            <person name="Thiel J."/>
            <person name="Malfatti S."/>
            <person name="Loper J.E."/>
            <person name="Lapidus A."/>
            <person name="Detter J.C."/>
            <person name="Land M."/>
            <person name="Richardson P.M."/>
            <person name="Kyrpides N.C."/>
            <person name="Ivanova N."/>
            <person name="Lindow S.E."/>
        </authorList>
    </citation>
    <scope>NUCLEOTIDE SEQUENCE [LARGE SCALE GENOMIC DNA]</scope>
    <source>
        <strain>B728a</strain>
    </source>
</reference>
<comment type="function">
    <text evidence="1">Involved in the regulation of the intracellular balance of NAD and NADP, and is a key enzyme in the biosynthesis of NADP. Catalyzes specifically the phosphorylation on 2'-hydroxyl of the adenosine moiety of NAD to yield NADP.</text>
</comment>
<comment type="catalytic activity">
    <reaction evidence="1">
        <text>NAD(+) + ATP = ADP + NADP(+) + H(+)</text>
        <dbReference type="Rhea" id="RHEA:18629"/>
        <dbReference type="ChEBI" id="CHEBI:15378"/>
        <dbReference type="ChEBI" id="CHEBI:30616"/>
        <dbReference type="ChEBI" id="CHEBI:57540"/>
        <dbReference type="ChEBI" id="CHEBI:58349"/>
        <dbReference type="ChEBI" id="CHEBI:456216"/>
        <dbReference type="EC" id="2.7.1.23"/>
    </reaction>
</comment>
<comment type="cofactor">
    <cofactor evidence="1">
        <name>a divalent metal cation</name>
        <dbReference type="ChEBI" id="CHEBI:60240"/>
    </cofactor>
</comment>
<comment type="subcellular location">
    <subcellularLocation>
        <location evidence="1">Cytoplasm</location>
    </subcellularLocation>
</comment>
<comment type="similarity">
    <text evidence="1">Belongs to the NAD kinase family.</text>
</comment>
<evidence type="ECO:0000255" key="1">
    <source>
        <dbReference type="HAMAP-Rule" id="MF_00361"/>
    </source>
</evidence>
<proteinExistence type="inferred from homology"/>
<gene>
    <name evidence="1" type="primary">nadK</name>
    <name type="ordered locus">Psyr_1685</name>
</gene>
<name>NADK_PSEU2</name>
<feature type="chain" id="PRO_0000229681" description="NAD kinase">
    <location>
        <begin position="1"/>
        <end position="296"/>
    </location>
</feature>
<feature type="active site" description="Proton acceptor" evidence="1">
    <location>
        <position position="72"/>
    </location>
</feature>
<feature type="binding site" evidence="1">
    <location>
        <begin position="72"/>
        <end position="73"/>
    </location>
    <ligand>
        <name>NAD(+)</name>
        <dbReference type="ChEBI" id="CHEBI:57540"/>
    </ligand>
</feature>
<feature type="binding site" evidence="1">
    <location>
        <begin position="146"/>
        <end position="147"/>
    </location>
    <ligand>
        <name>NAD(+)</name>
        <dbReference type="ChEBI" id="CHEBI:57540"/>
    </ligand>
</feature>
<feature type="binding site" evidence="1">
    <location>
        <position position="157"/>
    </location>
    <ligand>
        <name>NAD(+)</name>
        <dbReference type="ChEBI" id="CHEBI:57540"/>
    </ligand>
</feature>
<feature type="binding site" evidence="1">
    <location>
        <position position="174"/>
    </location>
    <ligand>
        <name>NAD(+)</name>
        <dbReference type="ChEBI" id="CHEBI:57540"/>
    </ligand>
</feature>
<feature type="binding site" evidence="1">
    <location>
        <position position="176"/>
    </location>
    <ligand>
        <name>NAD(+)</name>
        <dbReference type="ChEBI" id="CHEBI:57540"/>
    </ligand>
</feature>
<feature type="binding site" evidence="1">
    <location>
        <begin position="187"/>
        <end position="192"/>
    </location>
    <ligand>
        <name>NAD(+)</name>
        <dbReference type="ChEBI" id="CHEBI:57540"/>
    </ligand>
</feature>
<feature type="binding site" evidence="1">
    <location>
        <position position="247"/>
    </location>
    <ligand>
        <name>NAD(+)</name>
        <dbReference type="ChEBI" id="CHEBI:57540"/>
    </ligand>
</feature>
<organism>
    <name type="scientific">Pseudomonas syringae pv. syringae (strain B728a)</name>
    <dbReference type="NCBI Taxonomy" id="205918"/>
    <lineage>
        <taxon>Bacteria</taxon>
        <taxon>Pseudomonadati</taxon>
        <taxon>Pseudomonadota</taxon>
        <taxon>Gammaproteobacteria</taxon>
        <taxon>Pseudomonadales</taxon>
        <taxon>Pseudomonadaceae</taxon>
        <taxon>Pseudomonas</taxon>
        <taxon>Pseudomonas syringae</taxon>
    </lineage>
</organism>